<evidence type="ECO:0000250" key="1"/>
<evidence type="ECO:0000255" key="2">
    <source>
        <dbReference type="PROSITE-ProRule" id="PRU00137"/>
    </source>
</evidence>
<evidence type="ECO:0000305" key="3"/>
<protein>
    <recommendedName>
        <fullName>NTF2-related export protein 2</fullName>
    </recommendedName>
</protein>
<sequence length="142" mass="16257">MALAVNFKTYVDQACRAAEEFVNIYYETMDKRRHALVRLYLDKATLIWNGNVVTGLEALANFFEMLPSSEFQINMLDCQPVHEQATQCQTTVLVVTSGVVKFDGNKQHFFNQNFLLTAQSTPNSTVWKIASDCFRFQDWASI</sequence>
<proteinExistence type="evidence at transcript level"/>
<reference key="1">
    <citation type="journal article" date="2005" name="Science">
        <title>The transcriptional landscape of the mammalian genome.</title>
        <authorList>
            <person name="Carninci P."/>
            <person name="Kasukawa T."/>
            <person name="Katayama S."/>
            <person name="Gough J."/>
            <person name="Frith M.C."/>
            <person name="Maeda N."/>
            <person name="Oyama R."/>
            <person name="Ravasi T."/>
            <person name="Lenhard B."/>
            <person name="Wells C."/>
            <person name="Kodzius R."/>
            <person name="Shimokawa K."/>
            <person name="Bajic V.B."/>
            <person name="Brenner S.E."/>
            <person name="Batalov S."/>
            <person name="Forrest A.R."/>
            <person name="Zavolan M."/>
            <person name="Davis M.J."/>
            <person name="Wilming L.G."/>
            <person name="Aidinis V."/>
            <person name="Allen J.E."/>
            <person name="Ambesi-Impiombato A."/>
            <person name="Apweiler R."/>
            <person name="Aturaliya R.N."/>
            <person name="Bailey T.L."/>
            <person name="Bansal M."/>
            <person name="Baxter L."/>
            <person name="Beisel K.W."/>
            <person name="Bersano T."/>
            <person name="Bono H."/>
            <person name="Chalk A.M."/>
            <person name="Chiu K.P."/>
            <person name="Choudhary V."/>
            <person name="Christoffels A."/>
            <person name="Clutterbuck D.R."/>
            <person name="Crowe M.L."/>
            <person name="Dalla E."/>
            <person name="Dalrymple B.P."/>
            <person name="de Bono B."/>
            <person name="Della Gatta G."/>
            <person name="di Bernardo D."/>
            <person name="Down T."/>
            <person name="Engstrom P."/>
            <person name="Fagiolini M."/>
            <person name="Faulkner G."/>
            <person name="Fletcher C.F."/>
            <person name="Fukushima T."/>
            <person name="Furuno M."/>
            <person name="Futaki S."/>
            <person name="Gariboldi M."/>
            <person name="Georgii-Hemming P."/>
            <person name="Gingeras T.R."/>
            <person name="Gojobori T."/>
            <person name="Green R.E."/>
            <person name="Gustincich S."/>
            <person name="Harbers M."/>
            <person name="Hayashi Y."/>
            <person name="Hensch T.K."/>
            <person name="Hirokawa N."/>
            <person name="Hill D."/>
            <person name="Huminiecki L."/>
            <person name="Iacono M."/>
            <person name="Ikeo K."/>
            <person name="Iwama A."/>
            <person name="Ishikawa T."/>
            <person name="Jakt M."/>
            <person name="Kanapin A."/>
            <person name="Katoh M."/>
            <person name="Kawasawa Y."/>
            <person name="Kelso J."/>
            <person name="Kitamura H."/>
            <person name="Kitano H."/>
            <person name="Kollias G."/>
            <person name="Krishnan S.P."/>
            <person name="Kruger A."/>
            <person name="Kummerfeld S.K."/>
            <person name="Kurochkin I.V."/>
            <person name="Lareau L.F."/>
            <person name="Lazarevic D."/>
            <person name="Lipovich L."/>
            <person name="Liu J."/>
            <person name="Liuni S."/>
            <person name="McWilliam S."/>
            <person name="Madan Babu M."/>
            <person name="Madera M."/>
            <person name="Marchionni L."/>
            <person name="Matsuda H."/>
            <person name="Matsuzawa S."/>
            <person name="Miki H."/>
            <person name="Mignone F."/>
            <person name="Miyake S."/>
            <person name="Morris K."/>
            <person name="Mottagui-Tabar S."/>
            <person name="Mulder N."/>
            <person name="Nakano N."/>
            <person name="Nakauchi H."/>
            <person name="Ng P."/>
            <person name="Nilsson R."/>
            <person name="Nishiguchi S."/>
            <person name="Nishikawa S."/>
            <person name="Nori F."/>
            <person name="Ohara O."/>
            <person name="Okazaki Y."/>
            <person name="Orlando V."/>
            <person name="Pang K.C."/>
            <person name="Pavan W.J."/>
            <person name="Pavesi G."/>
            <person name="Pesole G."/>
            <person name="Petrovsky N."/>
            <person name="Piazza S."/>
            <person name="Reed J."/>
            <person name="Reid J.F."/>
            <person name="Ring B.Z."/>
            <person name="Ringwald M."/>
            <person name="Rost B."/>
            <person name="Ruan Y."/>
            <person name="Salzberg S.L."/>
            <person name="Sandelin A."/>
            <person name="Schneider C."/>
            <person name="Schoenbach C."/>
            <person name="Sekiguchi K."/>
            <person name="Semple C.A."/>
            <person name="Seno S."/>
            <person name="Sessa L."/>
            <person name="Sheng Y."/>
            <person name="Shibata Y."/>
            <person name="Shimada H."/>
            <person name="Shimada K."/>
            <person name="Silva D."/>
            <person name="Sinclair B."/>
            <person name="Sperling S."/>
            <person name="Stupka E."/>
            <person name="Sugiura K."/>
            <person name="Sultana R."/>
            <person name="Takenaka Y."/>
            <person name="Taki K."/>
            <person name="Tammoja K."/>
            <person name="Tan S.L."/>
            <person name="Tang S."/>
            <person name="Taylor M.S."/>
            <person name="Tegner J."/>
            <person name="Teichmann S.A."/>
            <person name="Ueda H.R."/>
            <person name="van Nimwegen E."/>
            <person name="Verardo R."/>
            <person name="Wei C.L."/>
            <person name="Yagi K."/>
            <person name="Yamanishi H."/>
            <person name="Zabarovsky E."/>
            <person name="Zhu S."/>
            <person name="Zimmer A."/>
            <person name="Hide W."/>
            <person name="Bult C."/>
            <person name="Grimmond S.M."/>
            <person name="Teasdale R.D."/>
            <person name="Liu E.T."/>
            <person name="Brusic V."/>
            <person name="Quackenbush J."/>
            <person name="Wahlestedt C."/>
            <person name="Mattick J.S."/>
            <person name="Hume D.A."/>
            <person name="Kai C."/>
            <person name="Sasaki D."/>
            <person name="Tomaru Y."/>
            <person name="Fukuda S."/>
            <person name="Kanamori-Katayama M."/>
            <person name="Suzuki M."/>
            <person name="Aoki J."/>
            <person name="Arakawa T."/>
            <person name="Iida J."/>
            <person name="Imamura K."/>
            <person name="Itoh M."/>
            <person name="Kato T."/>
            <person name="Kawaji H."/>
            <person name="Kawagashira N."/>
            <person name="Kawashima T."/>
            <person name="Kojima M."/>
            <person name="Kondo S."/>
            <person name="Konno H."/>
            <person name="Nakano K."/>
            <person name="Ninomiya N."/>
            <person name="Nishio T."/>
            <person name="Okada M."/>
            <person name="Plessy C."/>
            <person name="Shibata K."/>
            <person name="Shiraki T."/>
            <person name="Suzuki S."/>
            <person name="Tagami M."/>
            <person name="Waki K."/>
            <person name="Watahiki A."/>
            <person name="Okamura-Oho Y."/>
            <person name="Suzuki H."/>
            <person name="Kawai J."/>
            <person name="Hayashizaki Y."/>
        </authorList>
    </citation>
    <scope>NUCLEOTIDE SEQUENCE [LARGE SCALE MRNA] (ISOFORM 1)</scope>
    <source>
        <strain>C57BL/6J</strain>
        <tissue>Cerebellum</tissue>
        <tissue>Medulla oblongata</tissue>
    </source>
</reference>
<reference key="2">
    <citation type="journal article" date="2009" name="PLoS Biol.">
        <title>Lineage-specific biology revealed by a finished genome assembly of the mouse.</title>
        <authorList>
            <person name="Church D.M."/>
            <person name="Goodstadt L."/>
            <person name="Hillier L.W."/>
            <person name="Zody M.C."/>
            <person name="Goldstein S."/>
            <person name="She X."/>
            <person name="Bult C.J."/>
            <person name="Agarwala R."/>
            <person name="Cherry J.L."/>
            <person name="DiCuccio M."/>
            <person name="Hlavina W."/>
            <person name="Kapustin Y."/>
            <person name="Meric P."/>
            <person name="Maglott D."/>
            <person name="Birtle Z."/>
            <person name="Marques A.C."/>
            <person name="Graves T."/>
            <person name="Zhou S."/>
            <person name="Teague B."/>
            <person name="Potamousis K."/>
            <person name="Churas C."/>
            <person name="Place M."/>
            <person name="Herschleb J."/>
            <person name="Runnheim R."/>
            <person name="Forrest D."/>
            <person name="Amos-Landgraf J."/>
            <person name="Schwartz D.C."/>
            <person name="Cheng Z."/>
            <person name="Lindblad-Toh K."/>
            <person name="Eichler E.E."/>
            <person name="Ponting C.P."/>
        </authorList>
    </citation>
    <scope>NUCLEOTIDE SEQUENCE [LARGE SCALE GENOMIC DNA]</scope>
    <source>
        <strain>C57BL/6J</strain>
    </source>
</reference>
<reference key="3">
    <citation type="submission" date="2005-09" db="EMBL/GenBank/DDBJ databases">
        <authorList>
            <person name="Mural R.J."/>
            <person name="Adams M.D."/>
            <person name="Myers E.W."/>
            <person name="Smith H.O."/>
            <person name="Venter J.C."/>
        </authorList>
    </citation>
    <scope>NUCLEOTIDE SEQUENCE [LARGE SCALE GENOMIC DNA]</scope>
</reference>
<reference key="4">
    <citation type="journal article" date="2004" name="Genome Res.">
        <title>The status, quality, and expansion of the NIH full-length cDNA project: the Mammalian Gene Collection (MGC).</title>
        <authorList>
            <consortium name="The MGC Project Team"/>
        </authorList>
    </citation>
    <scope>NUCLEOTIDE SEQUENCE [LARGE SCALE MRNA] (ISOFORM 1)</scope>
    <source>
        <strain>C57BL/6J</strain>
        <tissue>Brain</tissue>
    </source>
</reference>
<organism>
    <name type="scientific">Mus musculus</name>
    <name type="common">Mouse</name>
    <dbReference type="NCBI Taxonomy" id="10090"/>
    <lineage>
        <taxon>Eukaryota</taxon>
        <taxon>Metazoa</taxon>
        <taxon>Chordata</taxon>
        <taxon>Craniata</taxon>
        <taxon>Vertebrata</taxon>
        <taxon>Euteleostomi</taxon>
        <taxon>Mammalia</taxon>
        <taxon>Eutheria</taxon>
        <taxon>Euarchontoglires</taxon>
        <taxon>Glires</taxon>
        <taxon>Rodentia</taxon>
        <taxon>Myomorpha</taxon>
        <taxon>Muroidea</taxon>
        <taxon>Muridae</taxon>
        <taxon>Murinae</taxon>
        <taxon>Mus</taxon>
        <taxon>Mus</taxon>
    </lineage>
</organism>
<accession>Q3UNA4</accession>
<accession>B1AVX3</accession>
<accession>B1AVX5</accession>
<accession>Q505F8</accession>
<accession>Q6NVE1</accession>
<accession>Q8C070</accession>
<keyword id="KW-0025">Alternative splicing</keyword>
<keyword id="KW-0963">Cytoplasm</keyword>
<keyword id="KW-0509">mRNA transport</keyword>
<keyword id="KW-0539">Nucleus</keyword>
<keyword id="KW-0653">Protein transport</keyword>
<keyword id="KW-1185">Reference proteome</keyword>
<keyword id="KW-0813">Transport</keyword>
<gene>
    <name type="primary">Nxt2</name>
</gene>
<feature type="chain" id="PRO_0000378200" description="NTF2-related export protein 2">
    <location>
        <begin position="1"/>
        <end position="142"/>
    </location>
</feature>
<feature type="domain" description="NTF2" evidence="2">
    <location>
        <begin position="17"/>
        <end position="136"/>
    </location>
</feature>
<feature type="splice variant" id="VSP_037528" description="In isoform 3." evidence="3">
    <location>
        <begin position="1"/>
        <end position="28"/>
    </location>
</feature>
<feature type="splice variant" id="VSP_037529" description="In isoform 2." evidence="3">
    <original>M</original>
    <variation>MKKFRSNWSNGDQHFGNSGSSWVEPQINYKYQRTQTSAEVRTSPGPALEQTISSPLM</variation>
    <location>
        <position position="1"/>
    </location>
</feature>
<feature type="sequence conflict" description="In Ref. 1; BAC27701." evidence="3" ref="1">
    <original>V</original>
    <variation>L</variation>
    <location>
        <position position="11"/>
    </location>
</feature>
<name>NXT2_MOUSE</name>
<comment type="function">
    <text evidence="1">Regulator of protein export for NES-containing proteins. Also plays a role in mRNA nuclear export (By similarity).</text>
</comment>
<comment type="subunit">
    <text evidence="1">Associates with NXF1, NXF2, NXF3 and NXF5.</text>
</comment>
<comment type="subcellular location">
    <subcellularLocation>
        <location evidence="1">Nucleus</location>
    </subcellularLocation>
    <subcellularLocation>
        <location evidence="1">Cytoplasm</location>
    </subcellularLocation>
    <text evidence="1">Shuttles between the nucleus and the cytoplasm.</text>
</comment>
<comment type="alternative products">
    <event type="alternative splicing"/>
    <isoform>
        <id>Q3UNA4-1</id>
        <name>1</name>
        <sequence type="displayed"/>
    </isoform>
    <isoform>
        <id>Q3UNA4-2</id>
        <name>2</name>
        <sequence type="described" ref="VSP_037529"/>
    </isoform>
    <isoform>
        <id>Q3UNA4-3</id>
        <name>3</name>
        <sequence type="described" ref="VSP_037528"/>
    </isoform>
</comment>
<dbReference type="EMBL" id="AK032102">
    <property type="protein sequence ID" value="BAC27701.1"/>
    <property type="molecule type" value="mRNA"/>
</dbReference>
<dbReference type="EMBL" id="AK144349">
    <property type="protein sequence ID" value="BAE25843.1"/>
    <property type="molecule type" value="mRNA"/>
</dbReference>
<dbReference type="EMBL" id="AL731672">
    <property type="status" value="NOT_ANNOTATED_CDS"/>
    <property type="molecule type" value="Genomic_DNA"/>
</dbReference>
<dbReference type="EMBL" id="CH466610">
    <property type="protein sequence ID" value="EDL14753.1"/>
    <property type="molecule type" value="Genomic_DNA"/>
</dbReference>
<dbReference type="EMBL" id="CH466610">
    <property type="protein sequence ID" value="EDL14754.1"/>
    <property type="molecule type" value="Genomic_DNA"/>
</dbReference>
<dbReference type="EMBL" id="BC068166">
    <property type="protein sequence ID" value="AAH68166.2"/>
    <property type="molecule type" value="mRNA"/>
</dbReference>
<dbReference type="EMBL" id="BC094570">
    <property type="protein sequence ID" value="AAH94570.2"/>
    <property type="molecule type" value="mRNA"/>
</dbReference>
<dbReference type="EMBL" id="BC118503">
    <property type="protein sequence ID" value="AAI18504.1"/>
    <property type="molecule type" value="mRNA"/>
</dbReference>
<dbReference type="CCDS" id="CCDS41155.1">
    <molecule id="Q3UNA4-1"/>
</dbReference>
<dbReference type="CCDS" id="CCDS72440.1">
    <molecule id="Q3UNA4-2"/>
</dbReference>
<dbReference type="CCDS" id="CCDS72441.1">
    <molecule id="Q3UNA4-3"/>
</dbReference>
<dbReference type="RefSeq" id="NP_001154902.1">
    <molecule id="Q3UNA4-1"/>
    <property type="nucleotide sequence ID" value="NM_001161430.2"/>
</dbReference>
<dbReference type="RefSeq" id="NP_001277461.1">
    <molecule id="Q3UNA4-2"/>
    <property type="nucleotide sequence ID" value="NM_001290532.1"/>
</dbReference>
<dbReference type="RefSeq" id="NP_001277462.1">
    <molecule id="Q3UNA4-3"/>
    <property type="nucleotide sequence ID" value="NM_001290533.1"/>
</dbReference>
<dbReference type="RefSeq" id="NP_766370.2">
    <molecule id="Q3UNA4-1"/>
    <property type="nucleotide sequence ID" value="NM_172782.4"/>
</dbReference>
<dbReference type="RefSeq" id="XP_030107190.1">
    <molecule id="Q3UNA4-1"/>
    <property type="nucleotide sequence ID" value="XM_030251330.2"/>
</dbReference>
<dbReference type="RefSeq" id="XP_030107191.1">
    <molecule id="Q3UNA4-1"/>
    <property type="nucleotide sequence ID" value="XM_030251331.2"/>
</dbReference>
<dbReference type="SMR" id="Q3UNA4"/>
<dbReference type="BioGRID" id="231838">
    <property type="interactions" value="5"/>
</dbReference>
<dbReference type="FunCoup" id="Q3UNA4">
    <property type="interactions" value="3737"/>
</dbReference>
<dbReference type="STRING" id="10090.ENSMUSP00000108538"/>
<dbReference type="iPTMnet" id="Q3UNA4"/>
<dbReference type="PhosphoSitePlus" id="Q3UNA4"/>
<dbReference type="PaxDb" id="10090-ENSMUSP00000048221"/>
<dbReference type="PeptideAtlas" id="Q3UNA4"/>
<dbReference type="ProteomicsDB" id="287868">
    <molecule id="Q3UNA4-1"/>
</dbReference>
<dbReference type="ProteomicsDB" id="287869">
    <molecule id="Q3UNA4-2"/>
</dbReference>
<dbReference type="ProteomicsDB" id="287870">
    <molecule id="Q3UNA4-3"/>
</dbReference>
<dbReference type="Pumba" id="Q3UNA4"/>
<dbReference type="Antibodypedia" id="15334">
    <property type="antibodies" value="38 antibodies from 18 providers"/>
</dbReference>
<dbReference type="DNASU" id="237082"/>
<dbReference type="Ensembl" id="ENSMUST00000042329.12">
    <molecule id="Q3UNA4-1"/>
    <property type="protein sequence ID" value="ENSMUSP00000048221.6"/>
    <property type="gene ID" value="ENSMUSG00000042271.14"/>
</dbReference>
<dbReference type="Ensembl" id="ENSMUST00000112913.2">
    <molecule id="Q3UNA4-3"/>
    <property type="protein sequence ID" value="ENSMUSP00000108535.2"/>
    <property type="gene ID" value="ENSMUSG00000042271.14"/>
</dbReference>
<dbReference type="Ensembl" id="ENSMUST00000112914.8">
    <molecule id="Q3UNA4-1"/>
    <property type="protein sequence ID" value="ENSMUSP00000108536.2"/>
    <property type="gene ID" value="ENSMUSG00000042271.14"/>
</dbReference>
<dbReference type="Ensembl" id="ENSMUST00000112916.9">
    <molecule id="Q3UNA4-2"/>
    <property type="protein sequence ID" value="ENSMUSP00000108538.3"/>
    <property type="gene ID" value="ENSMUSG00000042271.14"/>
</dbReference>
<dbReference type="GeneID" id="237082"/>
<dbReference type="KEGG" id="mmu:237082"/>
<dbReference type="UCSC" id="uc009ulr.3">
    <molecule id="Q3UNA4-1"/>
    <property type="organism name" value="mouse"/>
</dbReference>
<dbReference type="UCSC" id="uc057asw.1">
    <molecule id="Q3UNA4-2"/>
    <property type="organism name" value="mouse"/>
</dbReference>
<dbReference type="AGR" id="MGI:2147914"/>
<dbReference type="CTD" id="55916"/>
<dbReference type="MGI" id="MGI:2147914">
    <property type="gene designation" value="Nxt2"/>
</dbReference>
<dbReference type="VEuPathDB" id="HostDB:ENSMUSG00000042271"/>
<dbReference type="eggNOG" id="KOG4353">
    <property type="taxonomic scope" value="Eukaryota"/>
</dbReference>
<dbReference type="GeneTree" id="ENSGT00940000156381"/>
<dbReference type="HOGENOM" id="CLU_122448_1_0_1"/>
<dbReference type="InParanoid" id="Q3UNA4"/>
<dbReference type="OrthoDB" id="29469at9989"/>
<dbReference type="TreeFam" id="TF318944"/>
<dbReference type="BioGRID-ORCS" id="237082">
    <property type="hits" value="3 hits in 77 CRISPR screens"/>
</dbReference>
<dbReference type="ChiTaRS" id="Nxt2">
    <property type="organism name" value="mouse"/>
</dbReference>
<dbReference type="PRO" id="PR:Q3UNA4"/>
<dbReference type="Proteomes" id="UP000000589">
    <property type="component" value="Chromosome X"/>
</dbReference>
<dbReference type="RNAct" id="Q3UNA4">
    <property type="molecule type" value="protein"/>
</dbReference>
<dbReference type="Bgee" id="ENSMUSG00000042271">
    <property type="expression patterns" value="Expressed in cerebellum lobe and 210 other cell types or tissues"/>
</dbReference>
<dbReference type="GO" id="GO:0005737">
    <property type="term" value="C:cytoplasm"/>
    <property type="evidence" value="ECO:0000314"/>
    <property type="project" value="UniProtKB"/>
</dbReference>
<dbReference type="GO" id="GO:0005829">
    <property type="term" value="C:cytosol"/>
    <property type="evidence" value="ECO:0007669"/>
    <property type="project" value="Ensembl"/>
</dbReference>
<dbReference type="GO" id="GO:0042272">
    <property type="term" value="C:nuclear RNA export factor complex"/>
    <property type="evidence" value="ECO:0007669"/>
    <property type="project" value="Ensembl"/>
</dbReference>
<dbReference type="GO" id="GO:0005654">
    <property type="term" value="C:nucleoplasm"/>
    <property type="evidence" value="ECO:0007669"/>
    <property type="project" value="Ensembl"/>
</dbReference>
<dbReference type="GO" id="GO:0005634">
    <property type="term" value="C:nucleus"/>
    <property type="evidence" value="ECO:0000314"/>
    <property type="project" value="UniProtKB"/>
</dbReference>
<dbReference type="GO" id="GO:0048471">
    <property type="term" value="C:perinuclear region of cytoplasm"/>
    <property type="evidence" value="ECO:0000314"/>
    <property type="project" value="UniProtKB"/>
</dbReference>
<dbReference type="GO" id="GO:0051028">
    <property type="term" value="P:mRNA transport"/>
    <property type="evidence" value="ECO:0007669"/>
    <property type="project" value="UniProtKB-KW"/>
</dbReference>
<dbReference type="GO" id="GO:0006913">
    <property type="term" value="P:nucleocytoplasmic transport"/>
    <property type="evidence" value="ECO:0007669"/>
    <property type="project" value="InterPro"/>
</dbReference>
<dbReference type="GO" id="GO:0015031">
    <property type="term" value="P:protein transport"/>
    <property type="evidence" value="ECO:0007669"/>
    <property type="project" value="UniProtKB-KW"/>
</dbReference>
<dbReference type="CDD" id="cd00780">
    <property type="entry name" value="NTF2"/>
    <property type="match status" value="1"/>
</dbReference>
<dbReference type="FunFam" id="3.10.450.50:FF:000006">
    <property type="entry name" value="NTF2-related export protein 2 isoform 1"/>
    <property type="match status" value="1"/>
</dbReference>
<dbReference type="Gene3D" id="3.10.450.50">
    <property type="match status" value="1"/>
</dbReference>
<dbReference type="InterPro" id="IPR045875">
    <property type="entry name" value="NTF2"/>
</dbReference>
<dbReference type="InterPro" id="IPR032710">
    <property type="entry name" value="NTF2-like_dom_sf"/>
</dbReference>
<dbReference type="InterPro" id="IPR002075">
    <property type="entry name" value="NTF2_dom"/>
</dbReference>
<dbReference type="InterPro" id="IPR018222">
    <property type="entry name" value="Nuclear_transport_factor_2_euk"/>
</dbReference>
<dbReference type="PANTHER" id="PTHR12612">
    <property type="entry name" value="NUCLEAR TRANSPORT FACTOR 2"/>
    <property type="match status" value="1"/>
</dbReference>
<dbReference type="Pfam" id="PF02136">
    <property type="entry name" value="NTF2"/>
    <property type="match status" value="1"/>
</dbReference>
<dbReference type="SUPFAM" id="SSF54427">
    <property type="entry name" value="NTF2-like"/>
    <property type="match status" value="1"/>
</dbReference>
<dbReference type="PROSITE" id="PS50177">
    <property type="entry name" value="NTF2_DOMAIN"/>
    <property type="match status" value="1"/>
</dbReference>